<feature type="chain" id="PRO_0000220475" description="Cytochrome b6-f complex subunit 6">
    <location>
        <begin position="1"/>
        <end position="31"/>
    </location>
</feature>
<feature type="transmembrane region" description="Helical" evidence="1">
    <location>
        <begin position="4"/>
        <end position="24"/>
    </location>
</feature>
<geneLocation type="chloroplast"/>
<accession>Q4QYT2</accession>
<sequence length="31" mass="3426">MLTITSYFGFLLAALTITPALFIGLNKIRLI</sequence>
<keyword id="KW-0150">Chloroplast</keyword>
<keyword id="KW-0249">Electron transport</keyword>
<keyword id="KW-0472">Membrane</keyword>
<keyword id="KW-0602">Photosynthesis</keyword>
<keyword id="KW-0934">Plastid</keyword>
<keyword id="KW-0793">Thylakoid</keyword>
<keyword id="KW-0812">Transmembrane</keyword>
<keyword id="KW-1133">Transmembrane helix</keyword>
<keyword id="KW-0813">Transport</keyword>
<reference key="1">
    <citation type="journal article" date="2005" name="Theor. Appl. Genet.">
        <title>Very close relationship of the chloroplast genomes among Saccharum species.</title>
        <authorList>
            <person name="Takahashi S."/>
            <person name="Furukawa T."/>
            <person name="Asano T."/>
            <person name="Terajima Y."/>
            <person name="Shimada H."/>
            <person name="Sugimoto A."/>
            <person name="Kadowaki K."/>
        </authorList>
    </citation>
    <scope>NUCLEOTIDE SEQUENCE [GENOMIC DNA]</scope>
    <source>
        <strain>cv. Chunnee</strain>
        <strain>cv. Kewali14</strain>
    </source>
</reference>
<comment type="function">
    <text evidence="1">Component of the cytochrome b6-f complex, which mediates electron transfer between photosystem II (PSII) and photosystem I (PSI), cyclic electron flow around PSI, and state transitions. PetL is important for photoautotrophic growth as well as for electron transfer efficiency and stability of the cytochrome b6-f complex.</text>
</comment>
<comment type="subunit">
    <text evidence="1">The 4 large subunits of the cytochrome b6-f complex are cytochrome b6, subunit IV (17 kDa polypeptide, PetD), cytochrome f and the Rieske protein, while the 4 small subunits are PetG, PetL, PetM and PetN. The complex functions as a dimer.</text>
</comment>
<comment type="subcellular location">
    <subcellularLocation>
        <location evidence="1">Plastid</location>
        <location evidence="1">Chloroplast thylakoid membrane</location>
        <topology evidence="1">Single-pass membrane protein</topology>
    </subcellularLocation>
</comment>
<comment type="similarity">
    <text evidence="1">Belongs to the PetL family.</text>
</comment>
<dbReference type="EMBL" id="AP007054">
    <property type="protein sequence ID" value="BAE02600.1"/>
    <property type="molecule type" value="Genomic_DNA"/>
</dbReference>
<dbReference type="EMBL" id="AP007056">
    <property type="protein sequence ID" value="BAE02602.1"/>
    <property type="molecule type" value="Genomic_DNA"/>
</dbReference>
<dbReference type="RefSeq" id="YP_010721348.1">
    <property type="nucleotide sequence ID" value="NC_072524.1"/>
</dbReference>
<dbReference type="SMR" id="Q4QYT2"/>
<dbReference type="GeneID" id="79491110"/>
<dbReference type="GO" id="GO:0009535">
    <property type="term" value="C:chloroplast thylakoid membrane"/>
    <property type="evidence" value="ECO:0007669"/>
    <property type="project" value="UniProtKB-SubCell"/>
</dbReference>
<dbReference type="GO" id="GO:0009512">
    <property type="term" value="C:cytochrome b6f complex"/>
    <property type="evidence" value="ECO:0007669"/>
    <property type="project" value="InterPro"/>
</dbReference>
<dbReference type="GO" id="GO:0045158">
    <property type="term" value="F:electron transporter, transferring electrons within cytochrome b6/f complex of photosystem II activity"/>
    <property type="evidence" value="ECO:0007669"/>
    <property type="project" value="UniProtKB-UniRule"/>
</dbReference>
<dbReference type="GO" id="GO:0015979">
    <property type="term" value="P:photosynthesis"/>
    <property type="evidence" value="ECO:0007669"/>
    <property type="project" value="UniProtKB-KW"/>
</dbReference>
<dbReference type="HAMAP" id="MF_00433">
    <property type="entry name" value="Cytb6_f_PetL"/>
    <property type="match status" value="1"/>
</dbReference>
<dbReference type="InterPro" id="IPR007802">
    <property type="entry name" value="Cyt_b6/f_cplx_su6"/>
</dbReference>
<dbReference type="PANTHER" id="PTHR37266">
    <property type="entry name" value="CYTOCHROME B6-F COMPLEX SUBUNIT 6"/>
    <property type="match status" value="1"/>
</dbReference>
<dbReference type="PANTHER" id="PTHR37266:SF1">
    <property type="entry name" value="CYTOCHROME B6-F COMPLEX SUBUNIT 6"/>
    <property type="match status" value="1"/>
</dbReference>
<dbReference type="Pfam" id="PF05115">
    <property type="entry name" value="PetL"/>
    <property type="match status" value="1"/>
</dbReference>
<dbReference type="SUPFAM" id="SSF103436">
    <property type="entry name" value="PetL subunit of the cytochrome b6f complex"/>
    <property type="match status" value="1"/>
</dbReference>
<organism>
    <name type="scientific">Saccharum barberi</name>
    <name type="common">Indian sugarcane</name>
    <dbReference type="NCBI Taxonomy" id="152679"/>
    <lineage>
        <taxon>Eukaryota</taxon>
        <taxon>Viridiplantae</taxon>
        <taxon>Streptophyta</taxon>
        <taxon>Embryophyta</taxon>
        <taxon>Tracheophyta</taxon>
        <taxon>Spermatophyta</taxon>
        <taxon>Magnoliopsida</taxon>
        <taxon>Liliopsida</taxon>
        <taxon>Poales</taxon>
        <taxon>Poaceae</taxon>
        <taxon>PACMAD clade</taxon>
        <taxon>Panicoideae</taxon>
        <taxon>Andropogonodae</taxon>
        <taxon>Andropogoneae</taxon>
        <taxon>Saccharinae</taxon>
        <taxon>Saccharum</taxon>
        <taxon>Saccharum officinarum species complex</taxon>
    </lineage>
</organism>
<name>PETL_SACBR</name>
<gene>
    <name evidence="1" type="primary">petL</name>
</gene>
<evidence type="ECO:0000255" key="1">
    <source>
        <dbReference type="HAMAP-Rule" id="MF_00433"/>
    </source>
</evidence>
<proteinExistence type="inferred from homology"/>
<protein>
    <recommendedName>
        <fullName evidence="1">Cytochrome b6-f complex subunit 6</fullName>
    </recommendedName>
    <alternativeName>
        <fullName evidence="1">Cytochrome b6-f complex subunit PetL</fullName>
    </alternativeName>
    <alternativeName>
        <fullName evidence="1">Cytochrome b6-f complex subunit VI</fullName>
    </alternativeName>
</protein>